<feature type="chain" id="PRO_1000189659" description="ATP-dependent Clp protease proteolytic subunit">
    <location>
        <begin position="1"/>
        <end position="207"/>
    </location>
</feature>
<feature type="active site" description="Nucleophile" evidence="1">
    <location>
        <position position="111"/>
    </location>
</feature>
<feature type="active site" evidence="1">
    <location>
        <position position="136"/>
    </location>
</feature>
<organism>
    <name type="scientific">Proteus mirabilis (strain HI4320)</name>
    <dbReference type="NCBI Taxonomy" id="529507"/>
    <lineage>
        <taxon>Bacteria</taxon>
        <taxon>Pseudomonadati</taxon>
        <taxon>Pseudomonadota</taxon>
        <taxon>Gammaproteobacteria</taxon>
        <taxon>Enterobacterales</taxon>
        <taxon>Morganellaceae</taxon>
        <taxon>Proteus</taxon>
    </lineage>
</organism>
<evidence type="ECO:0000255" key="1">
    <source>
        <dbReference type="HAMAP-Rule" id="MF_00444"/>
    </source>
</evidence>
<accession>B4EU53</accession>
<reference key="1">
    <citation type="journal article" date="2008" name="J. Bacteriol.">
        <title>Complete genome sequence of uropathogenic Proteus mirabilis, a master of both adherence and motility.</title>
        <authorList>
            <person name="Pearson M.M."/>
            <person name="Sebaihia M."/>
            <person name="Churcher C."/>
            <person name="Quail M.A."/>
            <person name="Seshasayee A.S."/>
            <person name="Luscombe N.M."/>
            <person name="Abdellah Z."/>
            <person name="Arrosmith C."/>
            <person name="Atkin B."/>
            <person name="Chillingworth T."/>
            <person name="Hauser H."/>
            <person name="Jagels K."/>
            <person name="Moule S."/>
            <person name="Mungall K."/>
            <person name="Norbertczak H."/>
            <person name="Rabbinowitsch E."/>
            <person name="Walker D."/>
            <person name="Whithead S."/>
            <person name="Thomson N.R."/>
            <person name="Rather P.N."/>
            <person name="Parkhill J."/>
            <person name="Mobley H.L.T."/>
        </authorList>
    </citation>
    <scope>NUCLEOTIDE SEQUENCE [LARGE SCALE GENOMIC DNA]</scope>
    <source>
        <strain>HI4320</strain>
    </source>
</reference>
<keyword id="KW-0963">Cytoplasm</keyword>
<keyword id="KW-0378">Hydrolase</keyword>
<keyword id="KW-0645">Protease</keyword>
<keyword id="KW-1185">Reference proteome</keyword>
<keyword id="KW-0720">Serine protease</keyword>
<protein>
    <recommendedName>
        <fullName evidence="1">ATP-dependent Clp protease proteolytic subunit</fullName>
        <ecNumber evidence="1">3.4.21.92</ecNumber>
    </recommendedName>
    <alternativeName>
        <fullName evidence="1">Endopeptidase Clp</fullName>
    </alternativeName>
</protein>
<name>CLPP_PROMH</name>
<gene>
    <name evidence="1" type="primary">clpP</name>
    <name type="ordered locus">PMI0115</name>
</gene>
<proteinExistence type="inferred from homology"/>
<dbReference type="EC" id="3.4.21.92" evidence="1"/>
<dbReference type="EMBL" id="AM942759">
    <property type="protein sequence ID" value="CAR40393.1"/>
    <property type="molecule type" value="Genomic_DNA"/>
</dbReference>
<dbReference type="RefSeq" id="WP_004245088.1">
    <property type="nucleotide sequence ID" value="NC_010554.1"/>
</dbReference>
<dbReference type="SMR" id="B4EU53"/>
<dbReference type="MEROPS" id="S14.001"/>
<dbReference type="EnsemblBacteria" id="CAR40393">
    <property type="protein sequence ID" value="CAR40393"/>
    <property type="gene ID" value="PMI0115"/>
</dbReference>
<dbReference type="GeneID" id="93395404"/>
<dbReference type="KEGG" id="pmr:PMI0115"/>
<dbReference type="eggNOG" id="COG0740">
    <property type="taxonomic scope" value="Bacteria"/>
</dbReference>
<dbReference type="HOGENOM" id="CLU_058707_3_3_6"/>
<dbReference type="Proteomes" id="UP000008319">
    <property type="component" value="Chromosome"/>
</dbReference>
<dbReference type="GO" id="GO:0005737">
    <property type="term" value="C:cytoplasm"/>
    <property type="evidence" value="ECO:0007669"/>
    <property type="project" value="UniProtKB-SubCell"/>
</dbReference>
<dbReference type="GO" id="GO:0009368">
    <property type="term" value="C:endopeptidase Clp complex"/>
    <property type="evidence" value="ECO:0007669"/>
    <property type="project" value="TreeGrafter"/>
</dbReference>
<dbReference type="GO" id="GO:0004176">
    <property type="term" value="F:ATP-dependent peptidase activity"/>
    <property type="evidence" value="ECO:0007669"/>
    <property type="project" value="InterPro"/>
</dbReference>
<dbReference type="GO" id="GO:0051117">
    <property type="term" value="F:ATPase binding"/>
    <property type="evidence" value="ECO:0007669"/>
    <property type="project" value="TreeGrafter"/>
</dbReference>
<dbReference type="GO" id="GO:0004252">
    <property type="term" value="F:serine-type endopeptidase activity"/>
    <property type="evidence" value="ECO:0007669"/>
    <property type="project" value="UniProtKB-UniRule"/>
</dbReference>
<dbReference type="GO" id="GO:0006515">
    <property type="term" value="P:protein quality control for misfolded or incompletely synthesized proteins"/>
    <property type="evidence" value="ECO:0007669"/>
    <property type="project" value="TreeGrafter"/>
</dbReference>
<dbReference type="CDD" id="cd07017">
    <property type="entry name" value="S14_ClpP_2"/>
    <property type="match status" value="1"/>
</dbReference>
<dbReference type="FunFam" id="3.90.226.10:FF:000001">
    <property type="entry name" value="ATP-dependent Clp protease proteolytic subunit"/>
    <property type="match status" value="1"/>
</dbReference>
<dbReference type="Gene3D" id="3.90.226.10">
    <property type="entry name" value="2-enoyl-CoA Hydratase, Chain A, domain 1"/>
    <property type="match status" value="1"/>
</dbReference>
<dbReference type="HAMAP" id="MF_00444">
    <property type="entry name" value="ClpP"/>
    <property type="match status" value="1"/>
</dbReference>
<dbReference type="InterPro" id="IPR001907">
    <property type="entry name" value="ClpP"/>
</dbReference>
<dbReference type="InterPro" id="IPR029045">
    <property type="entry name" value="ClpP/crotonase-like_dom_sf"/>
</dbReference>
<dbReference type="InterPro" id="IPR023562">
    <property type="entry name" value="ClpP/TepA"/>
</dbReference>
<dbReference type="InterPro" id="IPR033135">
    <property type="entry name" value="ClpP_His_AS"/>
</dbReference>
<dbReference type="InterPro" id="IPR018215">
    <property type="entry name" value="ClpP_Ser_AS"/>
</dbReference>
<dbReference type="NCBIfam" id="TIGR00493">
    <property type="entry name" value="clpP"/>
    <property type="match status" value="1"/>
</dbReference>
<dbReference type="NCBIfam" id="NF001368">
    <property type="entry name" value="PRK00277.1"/>
    <property type="match status" value="1"/>
</dbReference>
<dbReference type="NCBIfam" id="NF009205">
    <property type="entry name" value="PRK12553.1"/>
    <property type="match status" value="1"/>
</dbReference>
<dbReference type="PANTHER" id="PTHR10381">
    <property type="entry name" value="ATP-DEPENDENT CLP PROTEASE PROTEOLYTIC SUBUNIT"/>
    <property type="match status" value="1"/>
</dbReference>
<dbReference type="PANTHER" id="PTHR10381:SF70">
    <property type="entry name" value="ATP-DEPENDENT CLP PROTEASE PROTEOLYTIC SUBUNIT"/>
    <property type="match status" value="1"/>
</dbReference>
<dbReference type="Pfam" id="PF00574">
    <property type="entry name" value="CLP_protease"/>
    <property type="match status" value="1"/>
</dbReference>
<dbReference type="PRINTS" id="PR00127">
    <property type="entry name" value="CLPPROTEASEP"/>
</dbReference>
<dbReference type="SUPFAM" id="SSF52096">
    <property type="entry name" value="ClpP/crotonase"/>
    <property type="match status" value="1"/>
</dbReference>
<dbReference type="PROSITE" id="PS00382">
    <property type="entry name" value="CLP_PROTEASE_HIS"/>
    <property type="match status" value="1"/>
</dbReference>
<dbReference type="PROSITE" id="PS00381">
    <property type="entry name" value="CLP_PROTEASE_SER"/>
    <property type="match status" value="1"/>
</dbReference>
<sequence>MSFNDTQEQFAPNMALVPMVIEQTSRGERSYDIYSRLLKERIIFLTGQVEDHMANLIVAQMLFLEAENPEKDINLYINSPGGVITAGMSIYDTMQYIKADVSTICMGQACSMGAFLLSAGAKGKRICLPNSRVMIHQPLGGYQGQATDIQIHAQEILKVKSRMNELMAQHTGKSIEEIERDTERDRFLSANEALEYGLVDKVYTQRS</sequence>
<comment type="function">
    <text evidence="1">Cleaves peptides in various proteins in a process that requires ATP hydrolysis. Has a chymotrypsin-like activity. Plays a major role in the degradation of misfolded proteins.</text>
</comment>
<comment type="catalytic activity">
    <reaction evidence="1">
        <text>Hydrolysis of proteins to small peptides in the presence of ATP and magnesium. alpha-casein is the usual test substrate. In the absence of ATP, only oligopeptides shorter than five residues are hydrolyzed (such as succinyl-Leu-Tyr-|-NHMec, and Leu-Tyr-Leu-|-Tyr-Trp, in which cleavage of the -Tyr-|-Leu- and -Tyr-|-Trp bonds also occurs).</text>
        <dbReference type="EC" id="3.4.21.92"/>
    </reaction>
</comment>
<comment type="subunit">
    <text evidence="1">Fourteen ClpP subunits assemble into 2 heptameric rings which stack back to back to give a disk-like structure with a central cavity, resembling the structure of eukaryotic proteasomes.</text>
</comment>
<comment type="subcellular location">
    <subcellularLocation>
        <location evidence="1">Cytoplasm</location>
    </subcellularLocation>
</comment>
<comment type="similarity">
    <text evidence="1">Belongs to the peptidase S14 family.</text>
</comment>